<gene>
    <name evidence="1" type="primary">rpsF</name>
    <name type="ordered locus">xcc-b100_2697</name>
</gene>
<protein>
    <recommendedName>
        <fullName evidence="1">Small ribosomal subunit protein bS6</fullName>
    </recommendedName>
    <alternativeName>
        <fullName evidence="3">30S ribosomal protein S6</fullName>
    </alternativeName>
</protein>
<name>RS6_XANCB</name>
<evidence type="ECO:0000255" key="1">
    <source>
        <dbReference type="HAMAP-Rule" id="MF_00360"/>
    </source>
</evidence>
<evidence type="ECO:0000256" key="2">
    <source>
        <dbReference type="SAM" id="MobiDB-lite"/>
    </source>
</evidence>
<evidence type="ECO:0000305" key="3"/>
<dbReference type="EMBL" id="AM920689">
    <property type="protein sequence ID" value="CAP52058.1"/>
    <property type="molecule type" value="Genomic_DNA"/>
</dbReference>
<dbReference type="SMR" id="B0RUY9"/>
<dbReference type="KEGG" id="xca:xcc-b100_2697"/>
<dbReference type="HOGENOM" id="CLU_113441_6_0_6"/>
<dbReference type="Proteomes" id="UP000001188">
    <property type="component" value="Chromosome"/>
</dbReference>
<dbReference type="GO" id="GO:0022627">
    <property type="term" value="C:cytosolic small ribosomal subunit"/>
    <property type="evidence" value="ECO:0007669"/>
    <property type="project" value="TreeGrafter"/>
</dbReference>
<dbReference type="GO" id="GO:0070181">
    <property type="term" value="F:small ribosomal subunit rRNA binding"/>
    <property type="evidence" value="ECO:0007669"/>
    <property type="project" value="TreeGrafter"/>
</dbReference>
<dbReference type="GO" id="GO:0003735">
    <property type="term" value="F:structural constituent of ribosome"/>
    <property type="evidence" value="ECO:0007669"/>
    <property type="project" value="InterPro"/>
</dbReference>
<dbReference type="GO" id="GO:0006412">
    <property type="term" value="P:translation"/>
    <property type="evidence" value="ECO:0007669"/>
    <property type="project" value="UniProtKB-UniRule"/>
</dbReference>
<dbReference type="CDD" id="cd00473">
    <property type="entry name" value="bS6"/>
    <property type="match status" value="1"/>
</dbReference>
<dbReference type="FunFam" id="3.30.70.60:FF:000003">
    <property type="entry name" value="30S ribosomal protein S6"/>
    <property type="match status" value="1"/>
</dbReference>
<dbReference type="Gene3D" id="3.30.70.60">
    <property type="match status" value="1"/>
</dbReference>
<dbReference type="HAMAP" id="MF_00360">
    <property type="entry name" value="Ribosomal_bS6"/>
    <property type="match status" value="1"/>
</dbReference>
<dbReference type="InterPro" id="IPR000529">
    <property type="entry name" value="Ribosomal_bS6"/>
</dbReference>
<dbReference type="InterPro" id="IPR035980">
    <property type="entry name" value="Ribosomal_bS6_sf"/>
</dbReference>
<dbReference type="InterPro" id="IPR020814">
    <property type="entry name" value="Ribosomal_S6_plastid/chlpt"/>
</dbReference>
<dbReference type="InterPro" id="IPR014717">
    <property type="entry name" value="Transl_elong_EF1B/ribsomal_bS6"/>
</dbReference>
<dbReference type="NCBIfam" id="TIGR00166">
    <property type="entry name" value="S6"/>
    <property type="match status" value="1"/>
</dbReference>
<dbReference type="PANTHER" id="PTHR21011">
    <property type="entry name" value="MITOCHONDRIAL 28S RIBOSOMAL PROTEIN S6"/>
    <property type="match status" value="1"/>
</dbReference>
<dbReference type="PANTHER" id="PTHR21011:SF1">
    <property type="entry name" value="SMALL RIBOSOMAL SUBUNIT PROTEIN BS6M"/>
    <property type="match status" value="1"/>
</dbReference>
<dbReference type="Pfam" id="PF01250">
    <property type="entry name" value="Ribosomal_S6"/>
    <property type="match status" value="1"/>
</dbReference>
<dbReference type="SUPFAM" id="SSF54995">
    <property type="entry name" value="Ribosomal protein S6"/>
    <property type="match status" value="1"/>
</dbReference>
<accession>B0RUY9</accession>
<organism>
    <name type="scientific">Xanthomonas campestris pv. campestris (strain B100)</name>
    <dbReference type="NCBI Taxonomy" id="509169"/>
    <lineage>
        <taxon>Bacteria</taxon>
        <taxon>Pseudomonadati</taxon>
        <taxon>Pseudomonadota</taxon>
        <taxon>Gammaproteobacteria</taxon>
        <taxon>Lysobacterales</taxon>
        <taxon>Lysobacteraceae</taxon>
        <taxon>Xanthomonas</taxon>
    </lineage>
</organism>
<sequence length="144" mass="16468">MSRHYEVVFLVHPDQSEQVPAMIERYKSLIEGGNGTIHRLEDWGRRQLAYPIQNLVKAHYVLLNIEVDQAVLSELVESFRFNDAVLRHLVIKRDGPDTEQSLIMKSKDEKGDKPERSERRRRDDEEVDAAPAATDTDGDNAEAA</sequence>
<proteinExistence type="inferred from homology"/>
<feature type="chain" id="PRO_1000120822" description="Small ribosomal subunit protein bS6">
    <location>
        <begin position="1"/>
        <end position="144"/>
    </location>
</feature>
<feature type="region of interest" description="Disordered" evidence="2">
    <location>
        <begin position="97"/>
        <end position="144"/>
    </location>
</feature>
<feature type="compositionally biased region" description="Basic and acidic residues" evidence="2">
    <location>
        <begin position="105"/>
        <end position="124"/>
    </location>
</feature>
<keyword id="KW-0687">Ribonucleoprotein</keyword>
<keyword id="KW-0689">Ribosomal protein</keyword>
<keyword id="KW-0694">RNA-binding</keyword>
<keyword id="KW-0699">rRNA-binding</keyword>
<reference key="1">
    <citation type="journal article" date="2008" name="J. Biotechnol.">
        <title>The genome of Xanthomonas campestris pv. campestris B100 and its use for the reconstruction of metabolic pathways involved in xanthan biosynthesis.</title>
        <authorList>
            <person name="Vorhoelter F.-J."/>
            <person name="Schneiker S."/>
            <person name="Goesmann A."/>
            <person name="Krause L."/>
            <person name="Bekel T."/>
            <person name="Kaiser O."/>
            <person name="Linke B."/>
            <person name="Patschkowski T."/>
            <person name="Rueckert C."/>
            <person name="Schmid J."/>
            <person name="Sidhu V.K."/>
            <person name="Sieber V."/>
            <person name="Tauch A."/>
            <person name="Watt S.A."/>
            <person name="Weisshaar B."/>
            <person name="Becker A."/>
            <person name="Niehaus K."/>
            <person name="Puehler A."/>
        </authorList>
    </citation>
    <scope>NUCLEOTIDE SEQUENCE [LARGE SCALE GENOMIC DNA]</scope>
    <source>
        <strain>B100</strain>
    </source>
</reference>
<comment type="function">
    <text evidence="1">Binds together with bS18 to 16S ribosomal RNA.</text>
</comment>
<comment type="similarity">
    <text evidence="1">Belongs to the bacterial ribosomal protein bS6 family.</text>
</comment>